<keyword id="KW-0010">Activator</keyword>
<keyword id="KW-0025">Alternative splicing</keyword>
<keyword id="KW-0238">DNA-binding</keyword>
<keyword id="KW-0371">Homeobox</keyword>
<keyword id="KW-1017">Isopeptide bond</keyword>
<keyword id="KW-0479">Metal-binding</keyword>
<keyword id="KW-0539">Nucleus</keyword>
<keyword id="KW-0597">Phosphoprotein</keyword>
<keyword id="KW-1185">Reference proteome</keyword>
<keyword id="KW-0677">Repeat</keyword>
<keyword id="KW-0678">Repressor</keyword>
<keyword id="KW-0804">Transcription</keyword>
<keyword id="KW-0805">Transcription regulation</keyword>
<keyword id="KW-0832">Ubl conjugation</keyword>
<keyword id="KW-0862">Zinc</keyword>
<keyword id="KW-0863">Zinc-finger</keyword>
<gene>
    <name evidence="8" type="primary">Zeb1</name>
    <name evidence="8" type="synonym">Tcf8</name>
</gene>
<reference key="1">
    <citation type="journal article" date="1996" name="DNA Cell Biol.">
        <title>Alternative splicing gives rise to two isoforms of Zfhep, a zinc finger/homeodomain protein that binds T3-response elements.</title>
        <authorList>
            <person name="Cabanillas A.M."/>
            <person name="Darling D.S."/>
        </authorList>
    </citation>
    <scope>NUCLEOTIDE SEQUENCE [MRNA] OF 6-1109</scope>
    <scope>ALTERNATIVE SPLICING</scope>
</reference>
<reference key="2">
    <citation type="journal article" date="2012" name="Nat. Commun.">
        <title>Quantitative maps of protein phosphorylation sites across 14 different rat organs and tissues.</title>
        <authorList>
            <person name="Lundby A."/>
            <person name="Secher A."/>
            <person name="Lage K."/>
            <person name="Nordsborg N.B."/>
            <person name="Dmytriyev A."/>
            <person name="Lundby C."/>
            <person name="Olsen J.V."/>
        </authorList>
    </citation>
    <scope>PHOSPHORYLATION [LARGE SCALE ANALYSIS] AT SER-31; SER-33 AND SER-678</scope>
    <scope>IDENTIFICATION BY MASS SPECTROMETRY [LARGE SCALE ANALYSIS]</scope>
</reference>
<evidence type="ECO:0000250" key="1"/>
<evidence type="ECO:0000250" key="2">
    <source>
        <dbReference type="UniProtKB" id="P37275"/>
    </source>
</evidence>
<evidence type="ECO:0000250" key="3">
    <source>
        <dbReference type="UniProtKB" id="Q64318"/>
    </source>
</evidence>
<evidence type="ECO:0000255" key="4">
    <source>
        <dbReference type="PROSITE-ProRule" id="PRU00042"/>
    </source>
</evidence>
<evidence type="ECO:0000256" key="5">
    <source>
        <dbReference type="SAM" id="MobiDB-lite"/>
    </source>
</evidence>
<evidence type="ECO:0000303" key="6">
    <source>
    </source>
</evidence>
<evidence type="ECO:0000305" key="7"/>
<evidence type="ECO:0000312" key="8">
    <source>
        <dbReference type="RGD" id="3831"/>
    </source>
</evidence>
<evidence type="ECO:0007744" key="9">
    <source>
    </source>
</evidence>
<feature type="chain" id="PRO_0000047234" description="Zinc finger E-box-binding homeobox 1">
    <location>
        <begin position="1"/>
        <end position="1109"/>
    </location>
</feature>
<feature type="zinc finger region" description="C2H2-type 1" evidence="4">
    <location>
        <begin position="150"/>
        <end position="173"/>
    </location>
</feature>
<feature type="zinc finger region" description="C2H2-type 2" evidence="4">
    <location>
        <begin position="180"/>
        <end position="202"/>
    </location>
</feature>
<feature type="zinc finger region" description="C2H2-type 3" evidence="4">
    <location>
        <begin position="220"/>
        <end position="242"/>
    </location>
</feature>
<feature type="zinc finger region" description="C2H2-type 4; atypical" evidence="4">
    <location>
        <begin position="248"/>
        <end position="272"/>
    </location>
</feature>
<feature type="DNA-binding region" description="Homeobox; atypical">
    <location>
        <begin position="559"/>
        <end position="618"/>
    </location>
</feature>
<feature type="zinc finger region" description="C2H2-type 5" evidence="4">
    <location>
        <begin position="881"/>
        <end position="903"/>
    </location>
</feature>
<feature type="zinc finger region" description="C2H2-type 6" evidence="4">
    <location>
        <begin position="909"/>
        <end position="931"/>
    </location>
</feature>
<feature type="zinc finger region" description="C2H2-type 7; atypical" evidence="4">
    <location>
        <begin position="937"/>
        <end position="958"/>
    </location>
</feature>
<feature type="region of interest" description="Disordered" evidence="5">
    <location>
        <begin position="1"/>
        <end position="106"/>
    </location>
</feature>
<feature type="region of interest" description="Disordered" evidence="5">
    <location>
        <begin position="123"/>
        <end position="143"/>
    </location>
</feature>
<feature type="region of interest" description="Disordered" evidence="5">
    <location>
        <begin position="278"/>
        <end position="307"/>
    </location>
</feature>
<feature type="region of interest" description="Disordered" evidence="5">
    <location>
        <begin position="468"/>
        <end position="501"/>
    </location>
</feature>
<feature type="region of interest" description="Disordered" evidence="5">
    <location>
        <begin position="525"/>
        <end position="566"/>
    </location>
</feature>
<feature type="region of interest" description="Disordered" evidence="5">
    <location>
        <begin position="614"/>
        <end position="711"/>
    </location>
</feature>
<feature type="region of interest" description="Disordered" evidence="5">
    <location>
        <begin position="834"/>
        <end position="873"/>
    </location>
</feature>
<feature type="region of interest" description="Disordered" evidence="5">
    <location>
        <begin position="968"/>
        <end position="1109"/>
    </location>
</feature>
<feature type="compositionally biased region" description="Low complexity" evidence="5">
    <location>
        <begin position="15"/>
        <end position="30"/>
    </location>
</feature>
<feature type="compositionally biased region" description="Acidic residues" evidence="5">
    <location>
        <begin position="87"/>
        <end position="98"/>
    </location>
</feature>
<feature type="compositionally biased region" description="Low complexity" evidence="5">
    <location>
        <begin position="288"/>
        <end position="304"/>
    </location>
</feature>
<feature type="compositionally biased region" description="Basic and acidic residues" evidence="5">
    <location>
        <begin position="483"/>
        <end position="501"/>
    </location>
</feature>
<feature type="compositionally biased region" description="Polar residues" evidence="5">
    <location>
        <begin position="654"/>
        <end position="665"/>
    </location>
</feature>
<feature type="compositionally biased region" description="Polar residues" evidence="5">
    <location>
        <begin position="673"/>
        <end position="703"/>
    </location>
</feature>
<feature type="compositionally biased region" description="Acidic residues" evidence="5">
    <location>
        <begin position="1012"/>
        <end position="1066"/>
    </location>
</feature>
<feature type="compositionally biased region" description="Low complexity" evidence="5">
    <location>
        <begin position="1071"/>
        <end position="1087"/>
    </location>
</feature>
<feature type="compositionally biased region" description="Basic and acidic residues" evidence="5">
    <location>
        <begin position="1097"/>
        <end position="1109"/>
    </location>
</feature>
<feature type="modified residue" description="Phosphoserine" evidence="9">
    <location>
        <position position="31"/>
    </location>
</feature>
<feature type="modified residue" description="Phosphoserine" evidence="9">
    <location>
        <position position="33"/>
    </location>
</feature>
<feature type="modified residue" description="Phosphoserine" evidence="3">
    <location>
        <position position="293"/>
    </location>
</feature>
<feature type="modified residue" description="Phosphoserine" evidence="2">
    <location>
        <position position="302"/>
    </location>
</feature>
<feature type="modified residue" description="Phosphoserine" evidence="2">
    <location>
        <position position="657"/>
    </location>
</feature>
<feature type="modified residue" description="Phosphoserine" evidence="3">
    <location>
        <position position="664"/>
    </location>
</feature>
<feature type="modified residue" description="Phosphoserine" evidence="3">
    <location>
        <position position="671"/>
    </location>
</feature>
<feature type="modified residue" description="Phosphoserine" evidence="9">
    <location>
        <position position="678"/>
    </location>
</feature>
<feature type="modified residue" description="Phosphothreonine" evidence="2">
    <location>
        <position position="680"/>
    </location>
</feature>
<feature type="modified residue" description="Phosphoserine" evidence="3">
    <location>
        <position position="682"/>
    </location>
</feature>
<feature type="cross-link" description="Glycyl lysine isopeptide (Lys-Gly) (interchain with G-Cter in SUMO2)" evidence="2">
    <location>
        <position position="166"/>
    </location>
</feature>
<feature type="cross-link" description="Glycyl lysine isopeptide (Lys-Gly) (interchain with G-Cter in SUMO2)" evidence="2">
    <location>
        <position position="175"/>
    </location>
</feature>
<feature type="cross-link" description="Glycyl lysine isopeptide (Lys-Gly) (interchain with G-Cter in SUMO2)" evidence="2">
    <location>
        <position position="287"/>
    </location>
</feature>
<feature type="cross-link" description="Glycyl lysine isopeptide (Lys-Gly) (interchain with G-Cter in SUMO2)" evidence="2">
    <location>
        <position position="311"/>
    </location>
</feature>
<feature type="cross-link" description="Glycyl lysine isopeptide (Lys-Gly) (interchain with G-Cter in SUMO2)" evidence="2">
    <location>
        <position position="315"/>
    </location>
</feature>
<feature type="cross-link" description="Glycyl lysine isopeptide (Lys-Gly) (interchain with G-Cter in SUMO); alternate" evidence="1">
    <location>
        <position position="327"/>
    </location>
</feature>
<feature type="cross-link" description="Glycyl lysine isopeptide (Lys-Gly) (interchain with G-Cter in SUMO2); alternate" evidence="2">
    <location>
        <position position="327"/>
    </location>
</feature>
<feature type="cross-link" description="Glycyl lysine isopeptide (Lys-Gly) (interchain with G-Cter in SUMO2)" evidence="2">
    <location>
        <position position="419"/>
    </location>
</feature>
<feature type="cross-link" description="Glycyl lysine isopeptide (Lys-Gly) (interchain with G-Cter in SUMO2)" evidence="2">
    <location>
        <position position="473"/>
    </location>
</feature>
<feature type="cross-link" description="Glycyl lysine isopeptide (Lys-Gly) (interchain with G-Cter in SUMO2)" evidence="2">
    <location>
        <position position="484"/>
    </location>
</feature>
<feature type="cross-link" description="Glycyl lysine isopeptide (Lys-Gly) (interchain with G-Cter in SUMO2)" evidence="2">
    <location>
        <position position="495"/>
    </location>
</feature>
<feature type="cross-link" description="Glycyl lysine isopeptide (Lys-Gly) (interchain with G-Cter in SUMO2)" evidence="2">
    <location>
        <position position="528"/>
    </location>
</feature>
<feature type="cross-link" description="Glycyl lysine isopeptide (Lys-Gly) (interchain with G-Cter in SUMO); alternate" evidence="1">
    <location>
        <position position="752"/>
    </location>
</feature>
<feature type="cross-link" description="Glycyl lysine isopeptide (Lys-Gly) (interchain with G-Cter in SUMO2); alternate" evidence="2">
    <location>
        <position position="752"/>
    </location>
</feature>
<feature type="splice variant" id="VSP_006881" description="In isoform 2." evidence="7">
    <location>
        <begin position="1"/>
        <end position="198"/>
    </location>
</feature>
<protein>
    <recommendedName>
        <fullName evidence="8">Zinc finger E-box-binding homeobox 1</fullName>
    </recommendedName>
    <alternativeName>
        <fullName evidence="8">Transcription factor 8</fullName>
        <shortName evidence="8">TCF-8</shortName>
    </alternativeName>
    <alternativeName>
        <fullName evidence="6">Zinc finger homeodomain enhancer-binding protein</fullName>
        <shortName evidence="6">Zfhep</shortName>
    </alternativeName>
</protein>
<sequence length="1109" mass="121627">MADGPRCKRRKQANPRRNNVTNYNTVVEANSDSDDEDKLHIVEEESVTDAADCEGGVPDDELPTDQTVLPGGSDRAGSAKNCWQDDVKDDECDSDAENEQNHDPNVEEFLQQQDTAVIYPEAPEEDQRQGTPEASGHDDNGTPDAFSQLLTCPYCDRGYKRFTSLKEHIKYRHEKNEDNFSCSLCSYTFAYRTQLERHMTSHKSGREQRHVTQSGGNRKFKCTECGKAFKYKHHLKEHLRIHSGEKPYECPNCKKRFSHSGSYSSHISSKKCISLMPVNGRPRSGLKTSQCSSPSLSTSPGSPTRPQIRQKIENKPLQEPLSVNQIKTEPVDYEFKPIVVASGINCSTPLQNGVFSGGGQLQATSSPQGVVQAVVLPTVGLVSPISINLSDIQNVLKVAVDGNIIRQVLENNQASLASKEQEAVSASSIQQGGHSVISAISLPLVDQDGTTKIIINYSLEQPGQLQVVPQNLKKENPAPPKSCKSEKSPEDLTVKSEKDKSFDGAADESTCLLCEDCPGDLNALPELKHYDPEHPAQPPPPAPATEKPESSASSAGNGDLSPSQPPLKNLLSLLKAYYALNAQPSTEELTKIADSVNLPLDVVKKWFEKMQAGQIPGQSLEPPSPGPGSGNIPAKTEEQPQPVDGNEPQEDSTRGQSPLKMTSSPVLPVGSAINGSRSCTSSPSPLNLSSARNPQGYSCVSEGTQEEPQVEPLDLSLPKQQGELLERSTVSSVYQNSVYSVQEEPLNLSCAKKEPQKDSCVTDSEPVVNVVPPSANPINIAIPTVTAQLPTIVAIADQNSVPCLRALAANKQTILIPQVAYTYSATVSPAMQEPPVKVIQPNGNQDERQDTSSEGVSVEDQNDSDCTPPKKKTRKAENGMYACDLCDKIFQKSSSLLRHKYEHTGKRPHECGICRKAFKHKHHLIEHMRLHSGEKPYQCDKCGKRFSHSGSYSQHMNHRYSYCKRGAEDRDAMEQEDTGPEALPEVLPTELVGARASPSQADSDERESLTREEDEDSEKEEEEEDKEMEELQEDKECENPQEEEEEEEEEEEEEEEEEEEEAEEAEHEAAAAKTGGAVEEEAAQQAGSFQQKASGSESKRLSEEKTNEA</sequence>
<comment type="function">
    <text evidence="3">Acts as a transcriptional repressor. Binds to E-box sequences in the immunoglobulin heavy chain enhancer as well as in the regulatory regions of many other tissue-specific genes. Represses E-cadherin promoter and induces an epithelial-mesenchymal transition (EMT) by recruiting SMARCA4/BRG1. Represses BCL6 transcription in the presence of the corepressor CTBP1. Positively regulates neuronal differentiation. Represses RCOR1 transcription activation during neurogenesis. Represses transcription by binding to the E box (5'-CANNTG-3'). In the absence of TGFB1, acts as a repressor of COL1A2 transcription via binding to the E-box in the upstream enhancer region (By similarity).</text>
</comment>
<comment type="subunit">
    <text evidence="2">Interacts (via N-terminus) with SMARCA4/BRG1.</text>
</comment>
<comment type="subcellular location">
    <subcellularLocation>
        <location evidence="3">Nucleus</location>
    </subcellularLocation>
</comment>
<comment type="alternative products">
    <event type="alternative splicing"/>
    <isoform>
        <id>Q62947-1</id>
        <name>1</name>
        <name>Zfhep-1</name>
        <sequence type="displayed"/>
    </isoform>
    <isoform>
        <id>Q62947-2</id>
        <name>2</name>
        <name>Zfhep-2</name>
        <sequence type="described" ref="VSP_006881"/>
    </isoform>
</comment>
<comment type="PTM">
    <text evidence="2">Ubiquitinated, leading to degradation in a proteasome-dependent manner. Deubiquitinated by USP51, leading to stabilization.</text>
</comment>
<comment type="similarity">
    <text evidence="7">Belongs to the delta-EF1/ZFH-1 C2H2-type zinc-finger family.</text>
</comment>
<accession>Q62947</accession>
<accession>Q62948</accession>
<name>ZEB1_RAT</name>
<dbReference type="EMBL" id="U51583">
    <property type="protein sequence ID" value="AAB17130.1"/>
    <property type="molecule type" value="mRNA"/>
</dbReference>
<dbReference type="EMBL" id="U51584">
    <property type="protein sequence ID" value="AAB17131.1"/>
    <property type="molecule type" value="mRNA"/>
</dbReference>
<dbReference type="RefSeq" id="NP_001295194.1">
    <molecule id="Q62947-1"/>
    <property type="nucleotide sequence ID" value="NM_001308265.3"/>
</dbReference>
<dbReference type="RefSeq" id="XP_038951332.1">
    <molecule id="Q62947-2"/>
    <property type="nucleotide sequence ID" value="XM_039095404.2"/>
</dbReference>
<dbReference type="RefSeq" id="XP_063132183.1">
    <molecule id="Q62947-2"/>
    <property type="nucleotide sequence ID" value="XM_063276113.1"/>
</dbReference>
<dbReference type="RefSeq" id="XP_063132184.1">
    <molecule id="Q62947-2"/>
    <property type="nucleotide sequence ID" value="XM_063276114.1"/>
</dbReference>
<dbReference type="FunCoup" id="Q62947">
    <property type="interactions" value="2806"/>
</dbReference>
<dbReference type="STRING" id="10116.ENSRNOP00000024336"/>
<dbReference type="GlyGen" id="Q62947">
    <property type="glycosylation" value="1 site"/>
</dbReference>
<dbReference type="iPTMnet" id="Q62947"/>
<dbReference type="PhosphoSitePlus" id="Q62947"/>
<dbReference type="PaxDb" id="10116-ENSRNOP00000024336"/>
<dbReference type="Ensembl" id="ENSRNOT00000024336.8">
    <molecule id="Q62947-1"/>
    <property type="protein sequence ID" value="ENSRNOP00000024336.5"/>
    <property type="gene ID" value="ENSRNOG00000017863.9"/>
</dbReference>
<dbReference type="GeneID" id="25705"/>
<dbReference type="KEGG" id="rno:25705"/>
<dbReference type="UCSC" id="RGD:3831">
    <molecule id="Q62947-1"/>
    <property type="organism name" value="rat"/>
</dbReference>
<dbReference type="AGR" id="RGD:3831"/>
<dbReference type="CTD" id="6935"/>
<dbReference type="RGD" id="3831">
    <property type="gene designation" value="Zeb1"/>
</dbReference>
<dbReference type="eggNOG" id="KOG3623">
    <property type="taxonomic scope" value="Eukaryota"/>
</dbReference>
<dbReference type="GeneTree" id="ENSGT00950000183208"/>
<dbReference type="InParanoid" id="Q62947"/>
<dbReference type="OMA" id="SYCKREP"/>
<dbReference type="OrthoDB" id="7491548at2759"/>
<dbReference type="PhylomeDB" id="Q62947"/>
<dbReference type="PRO" id="PR:Q62947"/>
<dbReference type="Proteomes" id="UP000002494">
    <property type="component" value="Chromosome 17"/>
</dbReference>
<dbReference type="GO" id="GO:0005634">
    <property type="term" value="C:nucleus"/>
    <property type="evidence" value="ECO:0000266"/>
    <property type="project" value="RGD"/>
</dbReference>
<dbReference type="GO" id="GO:0003682">
    <property type="term" value="F:chromatin binding"/>
    <property type="evidence" value="ECO:0000314"/>
    <property type="project" value="RGD"/>
</dbReference>
<dbReference type="GO" id="GO:0003700">
    <property type="term" value="F:DNA-binding transcription factor activity"/>
    <property type="evidence" value="ECO:0000304"/>
    <property type="project" value="RGD"/>
</dbReference>
<dbReference type="GO" id="GO:0000981">
    <property type="term" value="F:DNA-binding transcription factor activity, RNA polymerase II-specific"/>
    <property type="evidence" value="ECO:0000318"/>
    <property type="project" value="GO_Central"/>
</dbReference>
<dbReference type="GO" id="GO:0001227">
    <property type="term" value="F:DNA-binding transcription repressor activity, RNA polymerase II-specific"/>
    <property type="evidence" value="ECO:0000266"/>
    <property type="project" value="RGD"/>
</dbReference>
<dbReference type="GO" id="GO:0003690">
    <property type="term" value="F:double-stranded DNA binding"/>
    <property type="evidence" value="ECO:0000314"/>
    <property type="project" value="RGD"/>
</dbReference>
<dbReference type="GO" id="GO:0070888">
    <property type="term" value="F:E-box binding"/>
    <property type="evidence" value="ECO:0000250"/>
    <property type="project" value="UniProtKB"/>
</dbReference>
<dbReference type="GO" id="GO:0000978">
    <property type="term" value="F:RNA polymerase II cis-regulatory region sequence-specific DNA binding"/>
    <property type="evidence" value="ECO:0000318"/>
    <property type="project" value="GO_Central"/>
</dbReference>
<dbReference type="GO" id="GO:0043565">
    <property type="term" value="F:sequence-specific DNA binding"/>
    <property type="evidence" value="ECO:0000314"/>
    <property type="project" value="RGD"/>
</dbReference>
<dbReference type="GO" id="GO:0008270">
    <property type="term" value="F:zinc ion binding"/>
    <property type="evidence" value="ECO:0000304"/>
    <property type="project" value="RGD"/>
</dbReference>
<dbReference type="GO" id="GO:0048513">
    <property type="term" value="P:animal organ development"/>
    <property type="evidence" value="ECO:0000266"/>
    <property type="project" value="RGD"/>
</dbReference>
<dbReference type="GO" id="GO:0051216">
    <property type="term" value="P:cartilage development"/>
    <property type="evidence" value="ECO:0000266"/>
    <property type="project" value="RGD"/>
</dbReference>
<dbReference type="GO" id="GO:0008283">
    <property type="term" value="P:cell population proliferation"/>
    <property type="evidence" value="ECO:0000266"/>
    <property type="project" value="RGD"/>
</dbReference>
<dbReference type="GO" id="GO:0071230">
    <property type="term" value="P:cellular response to amino acid stimulus"/>
    <property type="evidence" value="ECO:0000266"/>
    <property type="project" value="RGD"/>
</dbReference>
<dbReference type="GO" id="GO:0071560">
    <property type="term" value="P:cellular response to transforming growth factor beta stimulus"/>
    <property type="evidence" value="ECO:0000270"/>
    <property type="project" value="RGD"/>
</dbReference>
<dbReference type="GO" id="GO:0007417">
    <property type="term" value="P:central nervous system development"/>
    <property type="evidence" value="ECO:0000266"/>
    <property type="project" value="RGD"/>
</dbReference>
<dbReference type="GO" id="GO:0090103">
    <property type="term" value="P:cochlea morphogenesis"/>
    <property type="evidence" value="ECO:0000266"/>
    <property type="project" value="RGD"/>
</dbReference>
<dbReference type="GO" id="GO:0048596">
    <property type="term" value="P:embryonic camera-type eye morphogenesis"/>
    <property type="evidence" value="ECO:0000266"/>
    <property type="project" value="RGD"/>
</dbReference>
<dbReference type="GO" id="GO:0048598">
    <property type="term" value="P:embryonic morphogenesis"/>
    <property type="evidence" value="ECO:0000266"/>
    <property type="project" value="RGD"/>
</dbReference>
<dbReference type="GO" id="GO:0048704">
    <property type="term" value="P:embryonic skeletal system morphogenesis"/>
    <property type="evidence" value="ECO:0000266"/>
    <property type="project" value="RGD"/>
</dbReference>
<dbReference type="GO" id="GO:0050673">
    <property type="term" value="P:epithelial cell proliferation"/>
    <property type="evidence" value="ECO:0000266"/>
    <property type="project" value="RGD"/>
</dbReference>
<dbReference type="GO" id="GO:0030900">
    <property type="term" value="P:forebrain development"/>
    <property type="evidence" value="ECO:0000270"/>
    <property type="project" value="RGD"/>
</dbReference>
<dbReference type="GO" id="GO:0043616">
    <property type="term" value="P:keratinocyte proliferation"/>
    <property type="evidence" value="ECO:0000266"/>
    <property type="project" value="RGD"/>
</dbReference>
<dbReference type="GO" id="GO:0045892">
    <property type="term" value="P:negative regulation of DNA-templated transcription"/>
    <property type="evidence" value="ECO:0000250"/>
    <property type="project" value="UniProtKB"/>
</dbReference>
<dbReference type="GO" id="GO:0045602">
    <property type="term" value="P:negative regulation of endothelial cell differentiation"/>
    <property type="evidence" value="ECO:0000266"/>
    <property type="project" value="RGD"/>
</dbReference>
<dbReference type="GO" id="GO:0030857">
    <property type="term" value="P:negative regulation of epithelial cell differentiation"/>
    <property type="evidence" value="ECO:0000266"/>
    <property type="project" value="RGD"/>
</dbReference>
<dbReference type="GO" id="GO:0050680">
    <property type="term" value="P:negative regulation of epithelial cell proliferation"/>
    <property type="evidence" value="ECO:0000266"/>
    <property type="project" value="RGD"/>
</dbReference>
<dbReference type="GO" id="GO:0010839">
    <property type="term" value="P:negative regulation of keratinocyte proliferation"/>
    <property type="evidence" value="ECO:0000266"/>
    <property type="project" value="RGD"/>
</dbReference>
<dbReference type="GO" id="GO:0000122">
    <property type="term" value="P:negative regulation of transcription by RNA polymerase II"/>
    <property type="evidence" value="ECO:0000314"/>
    <property type="project" value="RGD"/>
</dbReference>
<dbReference type="GO" id="GO:0007389">
    <property type="term" value="P:pattern specification process"/>
    <property type="evidence" value="ECO:0000266"/>
    <property type="project" value="RGD"/>
</dbReference>
<dbReference type="GO" id="GO:0045666">
    <property type="term" value="P:positive regulation of neuron differentiation"/>
    <property type="evidence" value="ECO:0000250"/>
    <property type="project" value="UniProtKB"/>
</dbReference>
<dbReference type="GO" id="GO:0045944">
    <property type="term" value="P:positive regulation of transcription by RNA polymerase II"/>
    <property type="evidence" value="ECO:0000315"/>
    <property type="project" value="RGD"/>
</dbReference>
<dbReference type="GO" id="GO:0010464">
    <property type="term" value="P:regulation of mesenchymal cell proliferation"/>
    <property type="evidence" value="ECO:0000266"/>
    <property type="project" value="RGD"/>
</dbReference>
<dbReference type="GO" id="GO:0051150">
    <property type="term" value="P:regulation of smooth muscle cell differentiation"/>
    <property type="evidence" value="ECO:0000266"/>
    <property type="project" value="RGD"/>
</dbReference>
<dbReference type="GO" id="GO:0033081">
    <property type="term" value="P:regulation of T cell differentiation in thymus"/>
    <property type="evidence" value="ECO:0000266"/>
    <property type="project" value="RGD"/>
</dbReference>
<dbReference type="GO" id="GO:0006357">
    <property type="term" value="P:regulation of transcription by RNA polymerase II"/>
    <property type="evidence" value="ECO:0000318"/>
    <property type="project" value="GO_Central"/>
</dbReference>
<dbReference type="GO" id="GO:0017015">
    <property type="term" value="P:regulation of transforming growth factor beta receptor signaling pathway"/>
    <property type="evidence" value="ECO:0000266"/>
    <property type="project" value="RGD"/>
</dbReference>
<dbReference type="GO" id="GO:0014823">
    <property type="term" value="P:response to activity"/>
    <property type="evidence" value="ECO:0000270"/>
    <property type="project" value="RGD"/>
</dbReference>
<dbReference type="GO" id="GO:0031667">
    <property type="term" value="P:response to nutrient levels"/>
    <property type="evidence" value="ECO:0000270"/>
    <property type="project" value="RGD"/>
</dbReference>
<dbReference type="GO" id="GO:0048752">
    <property type="term" value="P:semicircular canal morphogenesis"/>
    <property type="evidence" value="ECO:0000266"/>
    <property type="project" value="RGD"/>
</dbReference>
<dbReference type="FunFam" id="3.30.160.60:FF:000013">
    <property type="entry name" value="Putative zinc finger E-box-binding homeobox 2"/>
    <property type="match status" value="2"/>
</dbReference>
<dbReference type="FunFam" id="3.30.160.60:FF:000082">
    <property type="entry name" value="Putative zinc finger E-box-binding homeobox 2"/>
    <property type="match status" value="1"/>
</dbReference>
<dbReference type="FunFam" id="1.10.10.60:FF:000122">
    <property type="entry name" value="Zinc finger E-box binding homeobox 1"/>
    <property type="match status" value="1"/>
</dbReference>
<dbReference type="FunFam" id="3.30.160.60:FF:000744">
    <property type="entry name" value="zinc finger E-box-binding homeobox 1"/>
    <property type="match status" value="1"/>
</dbReference>
<dbReference type="FunFam" id="3.30.160.60:FF:000117">
    <property type="entry name" value="Zinc finger E-box-binding homeobox 2 isoform 1"/>
    <property type="match status" value="1"/>
</dbReference>
<dbReference type="FunFam" id="3.30.160.60:FF:000145">
    <property type="entry name" value="Zinc finger protein 574"/>
    <property type="match status" value="1"/>
</dbReference>
<dbReference type="Gene3D" id="3.30.160.60">
    <property type="entry name" value="Classic Zinc Finger"/>
    <property type="match status" value="6"/>
</dbReference>
<dbReference type="Gene3D" id="1.10.10.60">
    <property type="entry name" value="Homeodomain-like"/>
    <property type="match status" value="1"/>
</dbReference>
<dbReference type="InterPro" id="IPR008598">
    <property type="entry name" value="Di19_Zn-bd"/>
</dbReference>
<dbReference type="InterPro" id="IPR001356">
    <property type="entry name" value="HD"/>
</dbReference>
<dbReference type="InterPro" id="IPR009057">
    <property type="entry name" value="Homeodomain-like_sf"/>
</dbReference>
<dbReference type="InterPro" id="IPR036236">
    <property type="entry name" value="Znf_C2H2_sf"/>
</dbReference>
<dbReference type="InterPro" id="IPR013087">
    <property type="entry name" value="Znf_C2H2_type"/>
</dbReference>
<dbReference type="InterPro" id="IPR051574">
    <property type="entry name" value="ZnF_E-box_Homeobox"/>
</dbReference>
<dbReference type="PANTHER" id="PTHR24391">
    <property type="entry name" value="HISTONE H4 TRANSCRIPTION FACTOR-RELATED"/>
    <property type="match status" value="1"/>
</dbReference>
<dbReference type="PANTHER" id="PTHR24391:SF17">
    <property type="entry name" value="ZINC FINGER E-BOX-BINDING HOMEOBOX 1"/>
    <property type="match status" value="1"/>
</dbReference>
<dbReference type="Pfam" id="PF00096">
    <property type="entry name" value="zf-C2H2"/>
    <property type="match status" value="4"/>
</dbReference>
<dbReference type="Pfam" id="PF05605">
    <property type="entry name" value="zf-Di19"/>
    <property type="match status" value="1"/>
</dbReference>
<dbReference type="SMART" id="SM00389">
    <property type="entry name" value="HOX"/>
    <property type="match status" value="1"/>
</dbReference>
<dbReference type="SMART" id="SM00355">
    <property type="entry name" value="ZnF_C2H2"/>
    <property type="match status" value="7"/>
</dbReference>
<dbReference type="SUPFAM" id="SSF57667">
    <property type="entry name" value="beta-beta-alpha zinc fingers"/>
    <property type="match status" value="4"/>
</dbReference>
<dbReference type="SUPFAM" id="SSF46689">
    <property type="entry name" value="Homeodomain-like"/>
    <property type="match status" value="1"/>
</dbReference>
<dbReference type="PROSITE" id="PS00028">
    <property type="entry name" value="ZINC_FINGER_C2H2_1"/>
    <property type="match status" value="5"/>
</dbReference>
<dbReference type="PROSITE" id="PS50157">
    <property type="entry name" value="ZINC_FINGER_C2H2_2"/>
    <property type="match status" value="6"/>
</dbReference>
<organism>
    <name type="scientific">Rattus norvegicus</name>
    <name type="common">Rat</name>
    <dbReference type="NCBI Taxonomy" id="10116"/>
    <lineage>
        <taxon>Eukaryota</taxon>
        <taxon>Metazoa</taxon>
        <taxon>Chordata</taxon>
        <taxon>Craniata</taxon>
        <taxon>Vertebrata</taxon>
        <taxon>Euteleostomi</taxon>
        <taxon>Mammalia</taxon>
        <taxon>Eutheria</taxon>
        <taxon>Euarchontoglires</taxon>
        <taxon>Glires</taxon>
        <taxon>Rodentia</taxon>
        <taxon>Myomorpha</taxon>
        <taxon>Muroidea</taxon>
        <taxon>Muridae</taxon>
        <taxon>Murinae</taxon>
        <taxon>Rattus</taxon>
    </lineage>
</organism>
<proteinExistence type="evidence at protein level"/>